<reference key="1">
    <citation type="submission" date="2007-12" db="EMBL/GenBank/DDBJ databases">
        <title>Complete sequence of chromosome of Francisella philomiragia subsp. philomiragia ATCC 25017.</title>
        <authorList>
            <consortium name="US DOE Joint Genome Institute"/>
            <person name="Copeland A."/>
            <person name="Lucas S."/>
            <person name="Lapidus A."/>
            <person name="Barry K."/>
            <person name="Detter J.C."/>
            <person name="Glavina del Rio T."/>
            <person name="Hammon N."/>
            <person name="Israni S."/>
            <person name="Dalin E."/>
            <person name="Tice H."/>
            <person name="Pitluck S."/>
            <person name="Chain P."/>
            <person name="Malfatti S."/>
            <person name="Shin M."/>
            <person name="Vergez L."/>
            <person name="Schmutz J."/>
            <person name="Larimer F."/>
            <person name="Land M."/>
            <person name="Hauser L."/>
            <person name="Richardson P."/>
        </authorList>
    </citation>
    <scope>NUCLEOTIDE SEQUENCE [LARGE SCALE GENOMIC DNA]</scope>
    <source>
        <strain>ATCC 25017 / CCUG 19701 / FSC 153 / O#319-036</strain>
    </source>
</reference>
<evidence type="ECO:0000255" key="1">
    <source>
        <dbReference type="HAMAP-Rule" id="MF_01615"/>
    </source>
</evidence>
<protein>
    <recommendedName>
        <fullName evidence="1">Pyridoxal 5'-phosphate synthase subunit PdxT</fullName>
        <ecNumber evidence="1">4.3.3.6</ecNumber>
    </recommendedName>
    <alternativeName>
        <fullName evidence="1">Pdx2</fullName>
    </alternativeName>
    <alternativeName>
        <fullName evidence="1">Pyridoxal 5'-phosphate synthase glutaminase subunit</fullName>
        <ecNumber evidence="1">3.5.1.2</ecNumber>
    </alternativeName>
</protein>
<organism>
    <name type="scientific">Francisella philomiragia subsp. philomiragia (strain ATCC 25017 / CCUG 19701 / FSC 153 / O#319-036)</name>
    <dbReference type="NCBI Taxonomy" id="484022"/>
    <lineage>
        <taxon>Bacteria</taxon>
        <taxon>Pseudomonadati</taxon>
        <taxon>Pseudomonadota</taxon>
        <taxon>Gammaproteobacteria</taxon>
        <taxon>Thiotrichales</taxon>
        <taxon>Francisellaceae</taxon>
        <taxon>Francisella</taxon>
    </lineage>
</organism>
<dbReference type="EC" id="4.3.3.6" evidence="1"/>
<dbReference type="EC" id="3.5.1.2" evidence="1"/>
<dbReference type="EMBL" id="CP000937">
    <property type="protein sequence ID" value="ABZ86455.1"/>
    <property type="molecule type" value="Genomic_DNA"/>
</dbReference>
<dbReference type="SMR" id="B0TZ16"/>
<dbReference type="MEROPS" id="C26.A32"/>
<dbReference type="KEGG" id="fph:Fphi_0239"/>
<dbReference type="eggNOG" id="COG0311">
    <property type="taxonomic scope" value="Bacteria"/>
</dbReference>
<dbReference type="HOGENOM" id="CLU_069674_2_0_6"/>
<dbReference type="UniPathway" id="UPA00245"/>
<dbReference type="GO" id="GO:0005829">
    <property type="term" value="C:cytosol"/>
    <property type="evidence" value="ECO:0007669"/>
    <property type="project" value="TreeGrafter"/>
</dbReference>
<dbReference type="GO" id="GO:1903600">
    <property type="term" value="C:glutaminase complex"/>
    <property type="evidence" value="ECO:0007669"/>
    <property type="project" value="TreeGrafter"/>
</dbReference>
<dbReference type="GO" id="GO:0004359">
    <property type="term" value="F:glutaminase activity"/>
    <property type="evidence" value="ECO:0007669"/>
    <property type="project" value="UniProtKB-UniRule"/>
</dbReference>
<dbReference type="GO" id="GO:0036381">
    <property type="term" value="F:pyridoxal 5'-phosphate synthase (glutamine hydrolysing) activity"/>
    <property type="evidence" value="ECO:0007669"/>
    <property type="project" value="UniProtKB-UniRule"/>
</dbReference>
<dbReference type="GO" id="GO:0006543">
    <property type="term" value="P:glutamine catabolic process"/>
    <property type="evidence" value="ECO:0007669"/>
    <property type="project" value="UniProtKB-UniRule"/>
</dbReference>
<dbReference type="GO" id="GO:0042823">
    <property type="term" value="P:pyridoxal phosphate biosynthetic process"/>
    <property type="evidence" value="ECO:0007669"/>
    <property type="project" value="UniProtKB-UniRule"/>
</dbReference>
<dbReference type="GO" id="GO:0008614">
    <property type="term" value="P:pyridoxine metabolic process"/>
    <property type="evidence" value="ECO:0007669"/>
    <property type="project" value="TreeGrafter"/>
</dbReference>
<dbReference type="CDD" id="cd01749">
    <property type="entry name" value="GATase1_PB"/>
    <property type="match status" value="1"/>
</dbReference>
<dbReference type="FunFam" id="3.40.50.880:FF:000010">
    <property type="entry name" value="uncharacterized protein LOC100176842 isoform X2"/>
    <property type="match status" value="1"/>
</dbReference>
<dbReference type="Gene3D" id="3.40.50.880">
    <property type="match status" value="1"/>
</dbReference>
<dbReference type="HAMAP" id="MF_01615">
    <property type="entry name" value="PdxT"/>
    <property type="match status" value="1"/>
</dbReference>
<dbReference type="InterPro" id="IPR029062">
    <property type="entry name" value="Class_I_gatase-like"/>
</dbReference>
<dbReference type="InterPro" id="IPR002161">
    <property type="entry name" value="PdxT/SNO"/>
</dbReference>
<dbReference type="InterPro" id="IPR021196">
    <property type="entry name" value="PdxT/SNO_CS"/>
</dbReference>
<dbReference type="NCBIfam" id="TIGR03800">
    <property type="entry name" value="PLP_synth_Pdx2"/>
    <property type="match status" value="1"/>
</dbReference>
<dbReference type="NCBIfam" id="NF010050">
    <property type="entry name" value="PRK13526.1"/>
    <property type="match status" value="1"/>
</dbReference>
<dbReference type="PANTHER" id="PTHR31559">
    <property type="entry name" value="PYRIDOXAL 5'-PHOSPHATE SYNTHASE SUBUNIT SNO"/>
    <property type="match status" value="1"/>
</dbReference>
<dbReference type="PANTHER" id="PTHR31559:SF0">
    <property type="entry name" value="PYRIDOXAL 5'-PHOSPHATE SYNTHASE SUBUNIT SNO1-RELATED"/>
    <property type="match status" value="1"/>
</dbReference>
<dbReference type="Pfam" id="PF01174">
    <property type="entry name" value="SNO"/>
    <property type="match status" value="1"/>
</dbReference>
<dbReference type="PIRSF" id="PIRSF005639">
    <property type="entry name" value="Glut_amidoT_SNO"/>
    <property type="match status" value="1"/>
</dbReference>
<dbReference type="SUPFAM" id="SSF52317">
    <property type="entry name" value="Class I glutamine amidotransferase-like"/>
    <property type="match status" value="1"/>
</dbReference>
<dbReference type="PROSITE" id="PS01236">
    <property type="entry name" value="PDXT_SNO_1"/>
    <property type="match status" value="1"/>
</dbReference>
<dbReference type="PROSITE" id="PS51130">
    <property type="entry name" value="PDXT_SNO_2"/>
    <property type="match status" value="1"/>
</dbReference>
<comment type="function">
    <text evidence="1">Catalyzes the hydrolysis of glutamine to glutamate and ammonia as part of the biosynthesis of pyridoxal 5'-phosphate. The resulting ammonia molecule is channeled to the active site of PdxS.</text>
</comment>
<comment type="catalytic activity">
    <reaction evidence="1">
        <text>aldehydo-D-ribose 5-phosphate + D-glyceraldehyde 3-phosphate + L-glutamine = pyridoxal 5'-phosphate + L-glutamate + phosphate + 3 H2O + H(+)</text>
        <dbReference type="Rhea" id="RHEA:31507"/>
        <dbReference type="ChEBI" id="CHEBI:15377"/>
        <dbReference type="ChEBI" id="CHEBI:15378"/>
        <dbReference type="ChEBI" id="CHEBI:29985"/>
        <dbReference type="ChEBI" id="CHEBI:43474"/>
        <dbReference type="ChEBI" id="CHEBI:58273"/>
        <dbReference type="ChEBI" id="CHEBI:58359"/>
        <dbReference type="ChEBI" id="CHEBI:59776"/>
        <dbReference type="ChEBI" id="CHEBI:597326"/>
        <dbReference type="EC" id="4.3.3.6"/>
    </reaction>
</comment>
<comment type="catalytic activity">
    <reaction evidence="1">
        <text>L-glutamine + H2O = L-glutamate + NH4(+)</text>
        <dbReference type="Rhea" id="RHEA:15889"/>
        <dbReference type="ChEBI" id="CHEBI:15377"/>
        <dbReference type="ChEBI" id="CHEBI:28938"/>
        <dbReference type="ChEBI" id="CHEBI:29985"/>
        <dbReference type="ChEBI" id="CHEBI:58359"/>
        <dbReference type="EC" id="3.5.1.2"/>
    </reaction>
</comment>
<comment type="pathway">
    <text evidence="1">Cofactor biosynthesis; pyridoxal 5'-phosphate biosynthesis.</text>
</comment>
<comment type="subunit">
    <text evidence="1">In the presence of PdxS, forms a dodecamer of heterodimers. Only shows activity in the heterodimer.</text>
</comment>
<comment type="similarity">
    <text evidence="1">Belongs to the glutaminase PdxT/SNO family.</text>
</comment>
<accession>B0TZ16</accession>
<keyword id="KW-0315">Glutamine amidotransferase</keyword>
<keyword id="KW-0378">Hydrolase</keyword>
<keyword id="KW-0456">Lyase</keyword>
<keyword id="KW-0663">Pyridoxal phosphate</keyword>
<name>PDXT_FRAP2</name>
<gene>
    <name evidence="1" type="primary">pdxT</name>
    <name type="ordered locus">Fphi_0239</name>
</gene>
<proteinExistence type="inferred from homology"/>
<feature type="chain" id="PRO_1000088050" description="Pyridoxal 5'-phosphate synthase subunit PdxT">
    <location>
        <begin position="1"/>
        <end position="179"/>
    </location>
</feature>
<feature type="active site" description="Nucleophile" evidence="1">
    <location>
        <position position="79"/>
    </location>
</feature>
<feature type="active site" description="Charge relay system" evidence="1">
    <location>
        <position position="163"/>
    </location>
</feature>
<feature type="active site" description="Charge relay system" evidence="1">
    <location>
        <position position="165"/>
    </location>
</feature>
<feature type="binding site" evidence="1">
    <location>
        <begin position="48"/>
        <end position="50"/>
    </location>
    <ligand>
        <name>L-glutamine</name>
        <dbReference type="ChEBI" id="CHEBI:58359"/>
    </ligand>
</feature>
<feature type="binding site" evidence="1">
    <location>
        <position position="101"/>
    </location>
    <ligand>
        <name>L-glutamine</name>
        <dbReference type="ChEBI" id="CHEBI:58359"/>
    </ligand>
</feature>
<feature type="binding site" evidence="1">
    <location>
        <begin position="127"/>
        <end position="128"/>
    </location>
    <ligand>
        <name>L-glutamine</name>
        <dbReference type="ChEBI" id="CHEBI:58359"/>
    </ligand>
</feature>
<sequence>MSVSVGVLAIQGGFQKHAEMLESLGVEVKLVKFTNDFDEIDRLIIPGGESTALLNLLTKHQIFDKLQDFCSQNPVFGTCAGSIILSKGSQYLSLIDLEVERNGYGRQVDSFVTNLGFMGNSIKAVFIRAPKFTRVGDNIDVLAKFDDLPVLVRQGNILVSSFHPELTEDSSVHKYFLNM</sequence>